<feature type="chain" id="PRO_0000382041" description="Prephenate dehydratase">
    <location>
        <begin position="1"/>
        <end position="315"/>
    </location>
</feature>
<feature type="domain" description="Prephenate dehydratase" evidence="2">
    <location>
        <begin position="3"/>
        <end position="190"/>
    </location>
</feature>
<feature type="domain" description="ACT" evidence="3">
    <location>
        <begin position="204"/>
        <end position="281"/>
    </location>
</feature>
<feature type="site" description="Essential for activity" evidence="1">
    <location>
        <position position="183"/>
    </location>
</feature>
<protein>
    <recommendedName>
        <fullName>Prephenate dehydratase</fullName>
        <shortName>PDT</shortName>
        <ecNumber>4.2.1.51</ecNumber>
    </recommendedName>
</protein>
<dbReference type="EC" id="4.2.1.51"/>
<dbReference type="EMBL" id="CP000518">
    <property type="protein sequence ID" value="ABL94311.1"/>
    <property type="molecule type" value="Genomic_DNA"/>
</dbReference>
<dbReference type="SMR" id="A1UNA3"/>
<dbReference type="STRING" id="189918.Mkms_5122"/>
<dbReference type="KEGG" id="mkm:Mkms_5122"/>
<dbReference type="HOGENOM" id="CLU_035008_0_0_11"/>
<dbReference type="OrthoDB" id="9802281at2"/>
<dbReference type="UniPathway" id="UPA00121">
    <property type="reaction ID" value="UER00345"/>
</dbReference>
<dbReference type="GO" id="GO:0005737">
    <property type="term" value="C:cytoplasm"/>
    <property type="evidence" value="ECO:0007669"/>
    <property type="project" value="TreeGrafter"/>
</dbReference>
<dbReference type="GO" id="GO:0004664">
    <property type="term" value="F:prephenate dehydratase activity"/>
    <property type="evidence" value="ECO:0007669"/>
    <property type="project" value="UniProtKB-EC"/>
</dbReference>
<dbReference type="GO" id="GO:0042803">
    <property type="term" value="F:protein homodimerization activity"/>
    <property type="evidence" value="ECO:0000250"/>
    <property type="project" value="UniProtKB"/>
</dbReference>
<dbReference type="GO" id="GO:0009094">
    <property type="term" value="P:L-phenylalanine biosynthetic process"/>
    <property type="evidence" value="ECO:0007669"/>
    <property type="project" value="UniProtKB-UniPathway"/>
</dbReference>
<dbReference type="CDD" id="cd04905">
    <property type="entry name" value="ACT_CM-PDT"/>
    <property type="match status" value="1"/>
</dbReference>
<dbReference type="CDD" id="cd13632">
    <property type="entry name" value="PBP2_Aa-PDT_like"/>
    <property type="match status" value="1"/>
</dbReference>
<dbReference type="FunFam" id="3.30.70.260:FF:000012">
    <property type="entry name" value="Prephenate dehydratase"/>
    <property type="match status" value="1"/>
</dbReference>
<dbReference type="FunFam" id="3.40.190.10:FF:000064">
    <property type="entry name" value="Prephenate dehydratase"/>
    <property type="match status" value="1"/>
</dbReference>
<dbReference type="FunFam" id="3.40.190.10:FF:000146">
    <property type="entry name" value="Prephenate dehydratase"/>
    <property type="match status" value="1"/>
</dbReference>
<dbReference type="Gene3D" id="3.30.70.260">
    <property type="match status" value="1"/>
</dbReference>
<dbReference type="Gene3D" id="3.40.190.10">
    <property type="entry name" value="Periplasmic binding protein-like II"/>
    <property type="match status" value="2"/>
</dbReference>
<dbReference type="InterPro" id="IPR045865">
    <property type="entry name" value="ACT-like_dom_sf"/>
</dbReference>
<dbReference type="InterPro" id="IPR002912">
    <property type="entry name" value="ACT_dom"/>
</dbReference>
<dbReference type="InterPro" id="IPR008242">
    <property type="entry name" value="Chor_mutase/pphenate_deHydtase"/>
</dbReference>
<dbReference type="InterPro" id="IPR001086">
    <property type="entry name" value="Preph_deHydtase"/>
</dbReference>
<dbReference type="InterPro" id="IPR018528">
    <property type="entry name" value="Preph_deHydtase_CS"/>
</dbReference>
<dbReference type="NCBIfam" id="NF008865">
    <property type="entry name" value="PRK11898.1"/>
    <property type="match status" value="1"/>
</dbReference>
<dbReference type="PANTHER" id="PTHR21022">
    <property type="entry name" value="PREPHENATE DEHYDRATASE P PROTEIN"/>
    <property type="match status" value="1"/>
</dbReference>
<dbReference type="PANTHER" id="PTHR21022:SF19">
    <property type="entry name" value="PREPHENATE DEHYDRATASE-RELATED"/>
    <property type="match status" value="1"/>
</dbReference>
<dbReference type="Pfam" id="PF01842">
    <property type="entry name" value="ACT"/>
    <property type="match status" value="1"/>
</dbReference>
<dbReference type="Pfam" id="PF00800">
    <property type="entry name" value="PDT"/>
    <property type="match status" value="1"/>
</dbReference>
<dbReference type="PIRSF" id="PIRSF001500">
    <property type="entry name" value="Chor_mut_pdt_Ppr"/>
    <property type="match status" value="1"/>
</dbReference>
<dbReference type="SUPFAM" id="SSF55021">
    <property type="entry name" value="ACT-like"/>
    <property type="match status" value="1"/>
</dbReference>
<dbReference type="SUPFAM" id="SSF53850">
    <property type="entry name" value="Periplasmic binding protein-like II"/>
    <property type="match status" value="1"/>
</dbReference>
<dbReference type="PROSITE" id="PS51671">
    <property type="entry name" value="ACT"/>
    <property type="match status" value="1"/>
</dbReference>
<dbReference type="PROSITE" id="PS00857">
    <property type="entry name" value="PREPHENATE_DEHYDR_1"/>
    <property type="match status" value="1"/>
</dbReference>
<dbReference type="PROSITE" id="PS00858">
    <property type="entry name" value="PREPHENATE_DEHYDR_2"/>
    <property type="match status" value="1"/>
</dbReference>
<dbReference type="PROSITE" id="PS51171">
    <property type="entry name" value="PREPHENATE_DEHYDR_3"/>
    <property type="match status" value="1"/>
</dbReference>
<accession>A1UNA3</accession>
<sequence length="315" mass="32736">MPRIAYLGPQGTFTESALLQMISGAMVPGGDADDTAVTPVPTDSTPAGLEAVRSGAADYACVPIENSIEGSVLPTLDSLAVGAPLQIFAELTLAVSFSIVVRPDHDGDVGTVAAFPVAAAQVRRWLAEHLPAAQLVPAHSNAAAAADVAGGRADAGISTALAAERYGLRSLAAGVVDEPNARTRFVLVGRPAPPPARTGADRTSVALRLPNTPGALVAAMTELSIRDIDLTRIESRPTRTELGTYVFFLDCVGHLEDDAVAEALKALHRRCEDVRYLGSWPTGTAAGAPPPSSDEATRWLTRLREGLPTPPEGGR</sequence>
<evidence type="ECO:0000250" key="1"/>
<evidence type="ECO:0000255" key="2">
    <source>
        <dbReference type="PROSITE-ProRule" id="PRU00517"/>
    </source>
</evidence>
<evidence type="ECO:0000255" key="3">
    <source>
        <dbReference type="PROSITE-ProRule" id="PRU01007"/>
    </source>
</evidence>
<gene>
    <name type="primary">pheA</name>
    <name type="ordered locus">Mkms_5122</name>
</gene>
<proteinExistence type="inferred from homology"/>
<name>PHEA_MYCSK</name>
<reference key="1">
    <citation type="submission" date="2006-12" db="EMBL/GenBank/DDBJ databases">
        <title>Complete sequence of chromosome of Mycobacterium sp. KMS.</title>
        <authorList>
            <consortium name="US DOE Joint Genome Institute"/>
            <person name="Copeland A."/>
            <person name="Lucas S."/>
            <person name="Lapidus A."/>
            <person name="Barry K."/>
            <person name="Detter J.C."/>
            <person name="Glavina del Rio T."/>
            <person name="Hammon N."/>
            <person name="Israni S."/>
            <person name="Dalin E."/>
            <person name="Tice H."/>
            <person name="Pitluck S."/>
            <person name="Kiss H."/>
            <person name="Brettin T."/>
            <person name="Bruce D."/>
            <person name="Han C."/>
            <person name="Tapia R."/>
            <person name="Gilna P."/>
            <person name="Schmutz J."/>
            <person name="Larimer F."/>
            <person name="Land M."/>
            <person name="Hauser L."/>
            <person name="Kyrpides N."/>
            <person name="Mikhailova N."/>
            <person name="Miller C.D."/>
            <person name="Richardson P."/>
        </authorList>
    </citation>
    <scope>NUCLEOTIDE SEQUENCE [LARGE SCALE GENOMIC DNA]</scope>
    <source>
        <strain>KMS</strain>
    </source>
</reference>
<keyword id="KW-0028">Amino-acid biosynthesis</keyword>
<keyword id="KW-0057">Aromatic amino acid biosynthesis</keyword>
<keyword id="KW-0456">Lyase</keyword>
<keyword id="KW-0584">Phenylalanine biosynthesis</keyword>
<comment type="catalytic activity">
    <reaction>
        <text>prephenate + H(+) = 3-phenylpyruvate + CO2 + H2O</text>
        <dbReference type="Rhea" id="RHEA:21648"/>
        <dbReference type="ChEBI" id="CHEBI:15377"/>
        <dbReference type="ChEBI" id="CHEBI:15378"/>
        <dbReference type="ChEBI" id="CHEBI:16526"/>
        <dbReference type="ChEBI" id="CHEBI:18005"/>
        <dbReference type="ChEBI" id="CHEBI:29934"/>
        <dbReference type="EC" id="4.2.1.51"/>
    </reaction>
</comment>
<comment type="pathway">
    <text>Amino-acid biosynthesis; L-phenylalanine biosynthesis; phenylpyruvate from prephenate: step 1/1.</text>
</comment>
<comment type="subunit">
    <text evidence="1">Homodimer.</text>
</comment>
<organism>
    <name type="scientific">Mycobacterium sp. (strain KMS)</name>
    <dbReference type="NCBI Taxonomy" id="189918"/>
    <lineage>
        <taxon>Bacteria</taxon>
        <taxon>Bacillati</taxon>
        <taxon>Actinomycetota</taxon>
        <taxon>Actinomycetes</taxon>
        <taxon>Mycobacteriales</taxon>
        <taxon>Mycobacteriaceae</taxon>
        <taxon>Mycobacterium</taxon>
    </lineage>
</organism>